<protein>
    <recommendedName>
        <fullName evidence="1">ATP synthase subunit alpha</fullName>
        <ecNumber evidence="1">7.1.2.2</ecNumber>
    </recommendedName>
    <alternativeName>
        <fullName evidence="1">ATP synthase F1 sector subunit alpha</fullName>
    </alternativeName>
    <alternativeName>
        <fullName evidence="1">F-ATPase subunit alpha</fullName>
    </alternativeName>
</protein>
<reference key="1">
    <citation type="journal article" date="2008" name="DNA Res.">
        <title>Comparative genome analysis of Lactobacillus reuteri and Lactobacillus fermentum reveal a genomic island for reuterin and cobalamin production.</title>
        <authorList>
            <person name="Morita H."/>
            <person name="Toh H."/>
            <person name="Fukuda S."/>
            <person name="Horikawa H."/>
            <person name="Oshima K."/>
            <person name="Suzuki T."/>
            <person name="Murakami M."/>
            <person name="Hisamatsu S."/>
            <person name="Kato Y."/>
            <person name="Takizawa T."/>
            <person name="Fukuoka H."/>
            <person name="Yoshimura T."/>
            <person name="Itoh K."/>
            <person name="O'Sullivan D.J."/>
            <person name="McKay L.L."/>
            <person name="Ohno H."/>
            <person name="Kikuchi J."/>
            <person name="Masaoka T."/>
            <person name="Hattori M."/>
        </authorList>
    </citation>
    <scope>NUCLEOTIDE SEQUENCE [LARGE SCALE GENOMIC DNA]</scope>
    <source>
        <strain>NBRC 3956 / LMG 18251</strain>
    </source>
</reference>
<gene>
    <name evidence="1" type="primary">atpA</name>
    <name type="ordered locus">LAF_0439</name>
</gene>
<accession>B2GAU3</accession>
<evidence type="ECO:0000255" key="1">
    <source>
        <dbReference type="HAMAP-Rule" id="MF_01346"/>
    </source>
</evidence>
<organism>
    <name type="scientific">Limosilactobacillus fermentum (strain NBRC 3956 / LMG 18251)</name>
    <name type="common">Lactobacillus fermentum</name>
    <dbReference type="NCBI Taxonomy" id="334390"/>
    <lineage>
        <taxon>Bacteria</taxon>
        <taxon>Bacillati</taxon>
        <taxon>Bacillota</taxon>
        <taxon>Bacilli</taxon>
        <taxon>Lactobacillales</taxon>
        <taxon>Lactobacillaceae</taxon>
        <taxon>Limosilactobacillus</taxon>
    </lineage>
</organism>
<sequence length="512" mass="55420">MSIKTEEISSLIKKQLANYQDQISVEETGTVTYVGDGVARADGLENAMAGELLEFENGVYGMAQNLESNDVGIVILGDDTAIREGDTVKRTGRIMEVPVGDALLGRVVDPLGRSIDGLGDIKTDKTRPIERKAPGVMERKSVSQPLQTGIKVIDALVPIGRGQRELIIGDRKTGKTSIAIDTIINQKDQDMICIYVAIGQKESTVRSQVETLRKFGALDYTIVVSASASNPAPLLYIAPYAGAAMGEEFMFGGRDVLIIYDDLSKQADAYRELSLILRRPPGREAYPGDIFYTHSRLLERAARLSDDLGGGSMTALPVIQTQAGDVSAYIPTNVISITDGQIFLDADSFYAGQRPAIDAGTSVSRVGGDAQIKAMKKVSGTLRLDIASYNELAAFAQFGSDLDAATKARLDRGERTMEVLKQGLHAPQPVEQQVVTLYALAHNYLDDVPVDDVLRFESELATFMRSNHQDLYDSIKQSGQLPDGDGLDKALDAFKAGFQTSDQKQDASVAQN</sequence>
<proteinExistence type="inferred from homology"/>
<comment type="function">
    <text evidence="1">Produces ATP from ADP in the presence of a proton gradient across the membrane. The alpha chain is a regulatory subunit.</text>
</comment>
<comment type="catalytic activity">
    <reaction evidence="1">
        <text>ATP + H2O + 4 H(+)(in) = ADP + phosphate + 5 H(+)(out)</text>
        <dbReference type="Rhea" id="RHEA:57720"/>
        <dbReference type="ChEBI" id="CHEBI:15377"/>
        <dbReference type="ChEBI" id="CHEBI:15378"/>
        <dbReference type="ChEBI" id="CHEBI:30616"/>
        <dbReference type="ChEBI" id="CHEBI:43474"/>
        <dbReference type="ChEBI" id="CHEBI:456216"/>
        <dbReference type="EC" id="7.1.2.2"/>
    </reaction>
</comment>
<comment type="subunit">
    <text evidence="1">F-type ATPases have 2 components, CF(1) - the catalytic core - and CF(0) - the membrane proton channel. CF(1) has five subunits: alpha(3), beta(3), gamma(1), delta(1), epsilon(1). CF(0) has three main subunits: a(1), b(2) and c(9-12). The alpha and beta chains form an alternating ring which encloses part of the gamma chain. CF(1) is attached to CF(0) by a central stalk formed by the gamma and epsilon chains, while a peripheral stalk is formed by the delta and b chains.</text>
</comment>
<comment type="subcellular location">
    <subcellularLocation>
        <location evidence="1">Cell membrane</location>
        <topology evidence="1">Peripheral membrane protein</topology>
    </subcellularLocation>
</comment>
<comment type="similarity">
    <text evidence="1">Belongs to the ATPase alpha/beta chains family.</text>
</comment>
<name>ATPA_LIMF3</name>
<dbReference type="EC" id="7.1.2.2" evidence="1"/>
<dbReference type="EMBL" id="AP008937">
    <property type="protein sequence ID" value="BAG26775.1"/>
    <property type="molecule type" value="Genomic_DNA"/>
</dbReference>
<dbReference type="RefSeq" id="WP_012390921.1">
    <property type="nucleotide sequence ID" value="NC_010610.1"/>
</dbReference>
<dbReference type="SMR" id="B2GAU3"/>
<dbReference type="KEGG" id="lfe:LAF_0439"/>
<dbReference type="PATRIC" id="fig|334390.5.peg.478"/>
<dbReference type="eggNOG" id="COG0056">
    <property type="taxonomic scope" value="Bacteria"/>
</dbReference>
<dbReference type="HOGENOM" id="CLU_010091_2_1_9"/>
<dbReference type="Proteomes" id="UP000001697">
    <property type="component" value="Chromosome"/>
</dbReference>
<dbReference type="GO" id="GO:0005886">
    <property type="term" value="C:plasma membrane"/>
    <property type="evidence" value="ECO:0007669"/>
    <property type="project" value="UniProtKB-SubCell"/>
</dbReference>
<dbReference type="GO" id="GO:0045259">
    <property type="term" value="C:proton-transporting ATP synthase complex"/>
    <property type="evidence" value="ECO:0007669"/>
    <property type="project" value="UniProtKB-KW"/>
</dbReference>
<dbReference type="GO" id="GO:0043531">
    <property type="term" value="F:ADP binding"/>
    <property type="evidence" value="ECO:0007669"/>
    <property type="project" value="TreeGrafter"/>
</dbReference>
<dbReference type="GO" id="GO:0005524">
    <property type="term" value="F:ATP binding"/>
    <property type="evidence" value="ECO:0007669"/>
    <property type="project" value="UniProtKB-UniRule"/>
</dbReference>
<dbReference type="GO" id="GO:0046933">
    <property type="term" value="F:proton-transporting ATP synthase activity, rotational mechanism"/>
    <property type="evidence" value="ECO:0007669"/>
    <property type="project" value="UniProtKB-UniRule"/>
</dbReference>
<dbReference type="CDD" id="cd18113">
    <property type="entry name" value="ATP-synt_F1_alpha_C"/>
    <property type="match status" value="1"/>
</dbReference>
<dbReference type="CDD" id="cd18116">
    <property type="entry name" value="ATP-synt_F1_alpha_N"/>
    <property type="match status" value="1"/>
</dbReference>
<dbReference type="CDD" id="cd01132">
    <property type="entry name" value="F1-ATPase_alpha_CD"/>
    <property type="match status" value="1"/>
</dbReference>
<dbReference type="FunFam" id="1.20.150.20:FF:000001">
    <property type="entry name" value="ATP synthase subunit alpha"/>
    <property type="match status" value="1"/>
</dbReference>
<dbReference type="FunFam" id="2.40.30.20:FF:000001">
    <property type="entry name" value="ATP synthase subunit alpha"/>
    <property type="match status" value="1"/>
</dbReference>
<dbReference type="FunFam" id="3.40.50.300:FF:000002">
    <property type="entry name" value="ATP synthase subunit alpha"/>
    <property type="match status" value="1"/>
</dbReference>
<dbReference type="Gene3D" id="2.40.30.20">
    <property type="match status" value="1"/>
</dbReference>
<dbReference type="Gene3D" id="1.20.150.20">
    <property type="entry name" value="ATP synthase alpha/beta chain, C-terminal domain"/>
    <property type="match status" value="1"/>
</dbReference>
<dbReference type="Gene3D" id="3.40.50.300">
    <property type="entry name" value="P-loop containing nucleotide triphosphate hydrolases"/>
    <property type="match status" value="1"/>
</dbReference>
<dbReference type="HAMAP" id="MF_01346">
    <property type="entry name" value="ATP_synth_alpha_bact"/>
    <property type="match status" value="1"/>
</dbReference>
<dbReference type="InterPro" id="IPR023366">
    <property type="entry name" value="ATP_synth_asu-like_sf"/>
</dbReference>
<dbReference type="InterPro" id="IPR000793">
    <property type="entry name" value="ATP_synth_asu_C"/>
</dbReference>
<dbReference type="InterPro" id="IPR038376">
    <property type="entry name" value="ATP_synth_asu_C_sf"/>
</dbReference>
<dbReference type="InterPro" id="IPR033732">
    <property type="entry name" value="ATP_synth_F1_a_nt-bd_dom"/>
</dbReference>
<dbReference type="InterPro" id="IPR005294">
    <property type="entry name" value="ATP_synth_F1_asu"/>
</dbReference>
<dbReference type="InterPro" id="IPR020003">
    <property type="entry name" value="ATPase_a/bsu_AS"/>
</dbReference>
<dbReference type="InterPro" id="IPR004100">
    <property type="entry name" value="ATPase_F1/V1/A1_a/bsu_N"/>
</dbReference>
<dbReference type="InterPro" id="IPR036121">
    <property type="entry name" value="ATPase_F1/V1/A1_a/bsu_N_sf"/>
</dbReference>
<dbReference type="InterPro" id="IPR000194">
    <property type="entry name" value="ATPase_F1/V1/A1_a/bsu_nucl-bd"/>
</dbReference>
<dbReference type="InterPro" id="IPR027417">
    <property type="entry name" value="P-loop_NTPase"/>
</dbReference>
<dbReference type="NCBIfam" id="TIGR00962">
    <property type="entry name" value="atpA"/>
    <property type="match status" value="1"/>
</dbReference>
<dbReference type="NCBIfam" id="NF009884">
    <property type="entry name" value="PRK13343.1"/>
    <property type="match status" value="1"/>
</dbReference>
<dbReference type="PANTHER" id="PTHR48082">
    <property type="entry name" value="ATP SYNTHASE SUBUNIT ALPHA, MITOCHONDRIAL"/>
    <property type="match status" value="1"/>
</dbReference>
<dbReference type="PANTHER" id="PTHR48082:SF2">
    <property type="entry name" value="ATP SYNTHASE SUBUNIT ALPHA, MITOCHONDRIAL"/>
    <property type="match status" value="1"/>
</dbReference>
<dbReference type="Pfam" id="PF00006">
    <property type="entry name" value="ATP-synt_ab"/>
    <property type="match status" value="1"/>
</dbReference>
<dbReference type="Pfam" id="PF00306">
    <property type="entry name" value="ATP-synt_ab_C"/>
    <property type="match status" value="1"/>
</dbReference>
<dbReference type="Pfam" id="PF02874">
    <property type="entry name" value="ATP-synt_ab_N"/>
    <property type="match status" value="1"/>
</dbReference>
<dbReference type="PIRSF" id="PIRSF039088">
    <property type="entry name" value="F_ATPase_subunit_alpha"/>
    <property type="match status" value="1"/>
</dbReference>
<dbReference type="SUPFAM" id="SSF47917">
    <property type="entry name" value="C-terminal domain of alpha and beta subunits of F1 ATP synthase"/>
    <property type="match status" value="1"/>
</dbReference>
<dbReference type="SUPFAM" id="SSF50615">
    <property type="entry name" value="N-terminal domain of alpha and beta subunits of F1 ATP synthase"/>
    <property type="match status" value="1"/>
</dbReference>
<dbReference type="SUPFAM" id="SSF52540">
    <property type="entry name" value="P-loop containing nucleoside triphosphate hydrolases"/>
    <property type="match status" value="1"/>
</dbReference>
<dbReference type="PROSITE" id="PS00152">
    <property type="entry name" value="ATPASE_ALPHA_BETA"/>
    <property type="match status" value="1"/>
</dbReference>
<feature type="chain" id="PRO_1000143398" description="ATP synthase subunit alpha">
    <location>
        <begin position="1"/>
        <end position="512"/>
    </location>
</feature>
<feature type="binding site" evidence="1">
    <location>
        <begin position="169"/>
        <end position="176"/>
    </location>
    <ligand>
        <name>ATP</name>
        <dbReference type="ChEBI" id="CHEBI:30616"/>
    </ligand>
</feature>
<feature type="site" description="Required for activity" evidence="1">
    <location>
        <position position="362"/>
    </location>
</feature>
<keyword id="KW-0066">ATP synthesis</keyword>
<keyword id="KW-0067">ATP-binding</keyword>
<keyword id="KW-1003">Cell membrane</keyword>
<keyword id="KW-0139">CF(1)</keyword>
<keyword id="KW-0375">Hydrogen ion transport</keyword>
<keyword id="KW-0406">Ion transport</keyword>
<keyword id="KW-0472">Membrane</keyword>
<keyword id="KW-0547">Nucleotide-binding</keyword>
<keyword id="KW-1185">Reference proteome</keyword>
<keyword id="KW-1278">Translocase</keyword>
<keyword id="KW-0813">Transport</keyword>